<reference key="1">
    <citation type="journal article" date="2003" name="Proc. Natl. Acad. Sci. U.S.A.">
        <title>The complete genome sequence of the carcinogenic bacterium Helicobacter hepaticus.</title>
        <authorList>
            <person name="Suerbaum S."/>
            <person name="Josenhans C."/>
            <person name="Sterzenbach T."/>
            <person name="Drescher B."/>
            <person name="Brandt P."/>
            <person name="Bell M."/>
            <person name="Droege M."/>
            <person name="Fartmann B."/>
            <person name="Fischer H.-P."/>
            <person name="Ge Z."/>
            <person name="Hoerster A."/>
            <person name="Holland R."/>
            <person name="Klein K."/>
            <person name="Koenig J."/>
            <person name="Macko L."/>
            <person name="Mendz G.L."/>
            <person name="Nyakatura G."/>
            <person name="Schauer D.B."/>
            <person name="Shen Z."/>
            <person name="Weber J."/>
            <person name="Frosch M."/>
            <person name="Fox J.G."/>
        </authorList>
    </citation>
    <scope>NUCLEOTIDE SEQUENCE [LARGE SCALE GENOMIC DNA]</scope>
    <source>
        <strain>ATCC 51449 / 3B1</strain>
    </source>
</reference>
<sequence length="206" mass="23323">MLLCDIGNTFLHFYHKGRIWKEKPYALTKKKENLPIYYISVNERFERCLLASHPHCVNVNEHIELQTQYVGLGVDRKAACRAIDNGVIIDAGSAITADVMQEGVHIGGYIMPGLEAYRRMYSDISPVLNREIEPGVNLSILPQNTADAISFGVLKSVILMIKNTSRTKKLYFTGGDGKFFARFFENAIYDNTLVFKGMQKVLEKQI</sequence>
<evidence type="ECO:0000255" key="1">
    <source>
        <dbReference type="HAMAP-Rule" id="MF_01274"/>
    </source>
</evidence>
<proteinExistence type="inferred from homology"/>
<keyword id="KW-0067">ATP-binding</keyword>
<keyword id="KW-0173">Coenzyme A biosynthesis</keyword>
<keyword id="KW-0963">Cytoplasm</keyword>
<keyword id="KW-0418">Kinase</keyword>
<keyword id="KW-0479">Metal-binding</keyword>
<keyword id="KW-0547">Nucleotide-binding</keyword>
<keyword id="KW-0630">Potassium</keyword>
<keyword id="KW-1185">Reference proteome</keyword>
<keyword id="KW-0808">Transferase</keyword>
<organism>
    <name type="scientific">Helicobacter hepaticus (strain ATCC 51449 / 3B1)</name>
    <dbReference type="NCBI Taxonomy" id="235279"/>
    <lineage>
        <taxon>Bacteria</taxon>
        <taxon>Pseudomonadati</taxon>
        <taxon>Campylobacterota</taxon>
        <taxon>Epsilonproteobacteria</taxon>
        <taxon>Campylobacterales</taxon>
        <taxon>Helicobacteraceae</taxon>
        <taxon>Helicobacter</taxon>
    </lineage>
</organism>
<dbReference type="EC" id="2.7.1.33" evidence="1"/>
<dbReference type="EMBL" id="AE017125">
    <property type="protein sequence ID" value="AAP76747.1"/>
    <property type="molecule type" value="Genomic_DNA"/>
</dbReference>
<dbReference type="RefSeq" id="WP_011114993.1">
    <property type="nucleotide sequence ID" value="NC_004917.1"/>
</dbReference>
<dbReference type="SMR" id="Q7VJU3"/>
<dbReference type="STRING" id="235279.HH_0150"/>
<dbReference type="KEGG" id="hhe:HH_0150"/>
<dbReference type="eggNOG" id="COG1521">
    <property type="taxonomic scope" value="Bacteria"/>
</dbReference>
<dbReference type="HOGENOM" id="CLU_1213471_0_0_7"/>
<dbReference type="OrthoDB" id="5347692at2"/>
<dbReference type="UniPathway" id="UPA00241">
    <property type="reaction ID" value="UER00352"/>
</dbReference>
<dbReference type="Proteomes" id="UP000002495">
    <property type="component" value="Chromosome"/>
</dbReference>
<dbReference type="GO" id="GO:0005737">
    <property type="term" value="C:cytoplasm"/>
    <property type="evidence" value="ECO:0007669"/>
    <property type="project" value="UniProtKB-SubCell"/>
</dbReference>
<dbReference type="GO" id="GO:0005524">
    <property type="term" value="F:ATP binding"/>
    <property type="evidence" value="ECO:0007669"/>
    <property type="project" value="UniProtKB-UniRule"/>
</dbReference>
<dbReference type="GO" id="GO:0046872">
    <property type="term" value="F:metal ion binding"/>
    <property type="evidence" value="ECO:0007669"/>
    <property type="project" value="UniProtKB-KW"/>
</dbReference>
<dbReference type="GO" id="GO:0004594">
    <property type="term" value="F:pantothenate kinase activity"/>
    <property type="evidence" value="ECO:0007669"/>
    <property type="project" value="UniProtKB-UniRule"/>
</dbReference>
<dbReference type="GO" id="GO:0015937">
    <property type="term" value="P:coenzyme A biosynthetic process"/>
    <property type="evidence" value="ECO:0007669"/>
    <property type="project" value="UniProtKB-UniRule"/>
</dbReference>
<dbReference type="CDD" id="cd24015">
    <property type="entry name" value="ASKHA_NBD_PanK-III"/>
    <property type="match status" value="1"/>
</dbReference>
<dbReference type="Gene3D" id="3.30.420.40">
    <property type="match status" value="2"/>
</dbReference>
<dbReference type="HAMAP" id="MF_01274">
    <property type="entry name" value="Pantothen_kinase_3"/>
    <property type="match status" value="1"/>
</dbReference>
<dbReference type="InterPro" id="IPR043129">
    <property type="entry name" value="ATPase_NBD"/>
</dbReference>
<dbReference type="InterPro" id="IPR004619">
    <property type="entry name" value="Type_III_PanK"/>
</dbReference>
<dbReference type="NCBIfam" id="TIGR00671">
    <property type="entry name" value="baf"/>
    <property type="match status" value="1"/>
</dbReference>
<dbReference type="NCBIfam" id="NF009872">
    <property type="entry name" value="PRK13333.1"/>
    <property type="match status" value="1"/>
</dbReference>
<dbReference type="PANTHER" id="PTHR34265">
    <property type="entry name" value="TYPE III PANTOTHENATE KINASE"/>
    <property type="match status" value="1"/>
</dbReference>
<dbReference type="PANTHER" id="PTHR34265:SF1">
    <property type="entry name" value="TYPE III PANTOTHENATE KINASE"/>
    <property type="match status" value="1"/>
</dbReference>
<dbReference type="Pfam" id="PF03309">
    <property type="entry name" value="Pan_kinase"/>
    <property type="match status" value="1"/>
</dbReference>
<dbReference type="SUPFAM" id="SSF53067">
    <property type="entry name" value="Actin-like ATPase domain"/>
    <property type="match status" value="2"/>
</dbReference>
<gene>
    <name evidence="1" type="primary">coaX</name>
    <name type="ordered locus">HH_0150</name>
</gene>
<feature type="chain" id="PRO_0000267544" description="Type III pantothenate kinase">
    <location>
        <begin position="1"/>
        <end position="206"/>
    </location>
</feature>
<feature type="active site" description="Proton acceptor" evidence="1">
    <location>
        <position position="75"/>
    </location>
</feature>
<feature type="binding site" evidence="1">
    <location>
        <begin position="5"/>
        <end position="12"/>
    </location>
    <ligand>
        <name>ATP</name>
        <dbReference type="ChEBI" id="CHEBI:30616"/>
    </ligand>
</feature>
<feature type="binding site" evidence="1">
    <location>
        <position position="69"/>
    </location>
    <ligand>
        <name>substrate</name>
    </ligand>
</feature>
<feature type="binding site" evidence="1">
    <location>
        <begin position="73"/>
        <end position="76"/>
    </location>
    <ligand>
        <name>substrate</name>
    </ligand>
</feature>
<feature type="binding site" evidence="1">
    <location>
        <position position="90"/>
    </location>
    <ligand>
        <name>K(+)</name>
        <dbReference type="ChEBI" id="CHEBI:29103"/>
    </ligand>
</feature>
<feature type="binding site" evidence="1">
    <location>
        <position position="93"/>
    </location>
    <ligand>
        <name>ATP</name>
        <dbReference type="ChEBI" id="CHEBI:30616"/>
    </ligand>
</feature>
<feature type="binding site" evidence="1">
    <location>
        <position position="145"/>
    </location>
    <ligand>
        <name>substrate</name>
    </ligand>
</feature>
<name>COAX_HELHP</name>
<protein>
    <recommendedName>
        <fullName evidence="1">Type III pantothenate kinase</fullName>
        <ecNumber evidence="1">2.7.1.33</ecNumber>
    </recommendedName>
    <alternativeName>
        <fullName evidence="1">PanK-III</fullName>
    </alternativeName>
    <alternativeName>
        <fullName evidence="1">Pantothenic acid kinase</fullName>
    </alternativeName>
</protein>
<accession>Q7VJU3</accession>
<comment type="function">
    <text evidence="1">Catalyzes the phosphorylation of pantothenate (Pan), the first step in CoA biosynthesis.</text>
</comment>
<comment type="catalytic activity">
    <reaction evidence="1">
        <text>(R)-pantothenate + ATP = (R)-4'-phosphopantothenate + ADP + H(+)</text>
        <dbReference type="Rhea" id="RHEA:16373"/>
        <dbReference type="ChEBI" id="CHEBI:10986"/>
        <dbReference type="ChEBI" id="CHEBI:15378"/>
        <dbReference type="ChEBI" id="CHEBI:29032"/>
        <dbReference type="ChEBI" id="CHEBI:30616"/>
        <dbReference type="ChEBI" id="CHEBI:456216"/>
        <dbReference type="EC" id="2.7.1.33"/>
    </reaction>
</comment>
<comment type="cofactor">
    <cofactor evidence="1">
        <name>NH4(+)</name>
        <dbReference type="ChEBI" id="CHEBI:28938"/>
    </cofactor>
    <cofactor evidence="1">
        <name>K(+)</name>
        <dbReference type="ChEBI" id="CHEBI:29103"/>
    </cofactor>
    <text evidence="1">A monovalent cation. Ammonium or potassium.</text>
</comment>
<comment type="pathway">
    <text evidence="1">Cofactor biosynthesis; coenzyme A biosynthesis; CoA from (R)-pantothenate: step 1/5.</text>
</comment>
<comment type="subunit">
    <text evidence="1">Homodimer.</text>
</comment>
<comment type="subcellular location">
    <subcellularLocation>
        <location evidence="1">Cytoplasm</location>
    </subcellularLocation>
</comment>
<comment type="similarity">
    <text evidence="1">Belongs to the type III pantothenate kinase family.</text>
</comment>